<name>ATPG_PICP2</name>
<keyword id="KW-0066">ATP synthesis</keyword>
<keyword id="KW-0139">CF(1)</keyword>
<keyword id="KW-0375">Hydrogen ion transport</keyword>
<keyword id="KW-0406">Ion transport</keyword>
<keyword id="KW-0472">Membrane</keyword>
<keyword id="KW-1185">Reference proteome</keyword>
<keyword id="KW-0793">Thylakoid</keyword>
<keyword id="KW-0813">Transport</keyword>
<evidence type="ECO:0000255" key="1">
    <source>
        <dbReference type="HAMAP-Rule" id="MF_00815"/>
    </source>
</evidence>
<accession>B1XHY7</accession>
<dbReference type="EMBL" id="CP000951">
    <property type="protein sequence ID" value="ACA98738.1"/>
    <property type="molecule type" value="Genomic_DNA"/>
</dbReference>
<dbReference type="RefSeq" id="WP_012306362.1">
    <property type="nucleotide sequence ID" value="NZ_JAHHPU010000001.1"/>
</dbReference>
<dbReference type="SMR" id="B1XHY7"/>
<dbReference type="STRING" id="32049.SYNPCC7002_A0733"/>
<dbReference type="KEGG" id="syp:SYNPCC7002_A0733"/>
<dbReference type="eggNOG" id="COG0224">
    <property type="taxonomic scope" value="Bacteria"/>
</dbReference>
<dbReference type="HOGENOM" id="CLU_050669_0_0_3"/>
<dbReference type="Proteomes" id="UP000001688">
    <property type="component" value="Chromosome"/>
</dbReference>
<dbReference type="GO" id="GO:0031676">
    <property type="term" value="C:plasma membrane-derived thylakoid membrane"/>
    <property type="evidence" value="ECO:0007669"/>
    <property type="project" value="UniProtKB-SubCell"/>
</dbReference>
<dbReference type="GO" id="GO:0045259">
    <property type="term" value="C:proton-transporting ATP synthase complex"/>
    <property type="evidence" value="ECO:0007669"/>
    <property type="project" value="UniProtKB-KW"/>
</dbReference>
<dbReference type="GO" id="GO:0005524">
    <property type="term" value="F:ATP binding"/>
    <property type="evidence" value="ECO:0007669"/>
    <property type="project" value="UniProtKB-UniRule"/>
</dbReference>
<dbReference type="GO" id="GO:0046933">
    <property type="term" value="F:proton-transporting ATP synthase activity, rotational mechanism"/>
    <property type="evidence" value="ECO:0007669"/>
    <property type="project" value="UniProtKB-UniRule"/>
</dbReference>
<dbReference type="CDD" id="cd12151">
    <property type="entry name" value="F1-ATPase_gamma"/>
    <property type="match status" value="1"/>
</dbReference>
<dbReference type="FunFam" id="3.40.1380.10:FF:000006">
    <property type="entry name" value="ATP synthase gamma chain"/>
    <property type="match status" value="1"/>
</dbReference>
<dbReference type="FunFam" id="1.10.287.80:FF:000003">
    <property type="entry name" value="ATP synthase gamma chain, chloroplastic"/>
    <property type="match status" value="1"/>
</dbReference>
<dbReference type="FunFam" id="1.10.287.80:FF:000004">
    <property type="entry name" value="ATP synthase gamma chain, chloroplastic"/>
    <property type="match status" value="1"/>
</dbReference>
<dbReference type="Gene3D" id="3.40.1380.10">
    <property type="match status" value="1"/>
</dbReference>
<dbReference type="Gene3D" id="1.10.287.80">
    <property type="entry name" value="ATP synthase, gamma subunit, helix hairpin domain"/>
    <property type="match status" value="2"/>
</dbReference>
<dbReference type="HAMAP" id="MF_00815">
    <property type="entry name" value="ATP_synth_gamma_bact"/>
    <property type="match status" value="1"/>
</dbReference>
<dbReference type="InterPro" id="IPR035968">
    <property type="entry name" value="ATP_synth_F1_ATPase_gsu"/>
</dbReference>
<dbReference type="InterPro" id="IPR000131">
    <property type="entry name" value="ATP_synth_F1_gsu"/>
</dbReference>
<dbReference type="InterPro" id="IPR023632">
    <property type="entry name" value="ATP_synth_F1_gsu_CS"/>
</dbReference>
<dbReference type="NCBIfam" id="TIGR01146">
    <property type="entry name" value="ATPsyn_F1gamma"/>
    <property type="match status" value="1"/>
</dbReference>
<dbReference type="NCBIfam" id="NF004145">
    <property type="entry name" value="PRK05621.1-2"/>
    <property type="match status" value="1"/>
</dbReference>
<dbReference type="PANTHER" id="PTHR11693">
    <property type="entry name" value="ATP SYNTHASE GAMMA CHAIN"/>
    <property type="match status" value="1"/>
</dbReference>
<dbReference type="PANTHER" id="PTHR11693:SF41">
    <property type="entry name" value="ATP SYNTHASE GAMMA CHAIN, CHLOROPLASTIC"/>
    <property type="match status" value="1"/>
</dbReference>
<dbReference type="Pfam" id="PF00231">
    <property type="entry name" value="ATP-synt"/>
    <property type="match status" value="1"/>
</dbReference>
<dbReference type="PRINTS" id="PR00126">
    <property type="entry name" value="ATPASEGAMMA"/>
</dbReference>
<dbReference type="SUPFAM" id="SSF52943">
    <property type="entry name" value="ATP synthase (F1-ATPase), gamma subunit"/>
    <property type="match status" value="1"/>
</dbReference>
<dbReference type="PROSITE" id="PS00153">
    <property type="entry name" value="ATPASE_GAMMA"/>
    <property type="match status" value="1"/>
</dbReference>
<reference key="1">
    <citation type="submission" date="2008-02" db="EMBL/GenBank/DDBJ databases">
        <title>Complete sequence of Synechococcus sp. PCC 7002.</title>
        <authorList>
            <person name="Li T."/>
            <person name="Zhao J."/>
            <person name="Zhao C."/>
            <person name="Liu Z."/>
            <person name="Zhao F."/>
            <person name="Marquardt J."/>
            <person name="Nomura C.T."/>
            <person name="Persson S."/>
            <person name="Detter J.C."/>
            <person name="Richardson P.M."/>
            <person name="Lanz C."/>
            <person name="Schuster S.C."/>
            <person name="Wang J."/>
            <person name="Li S."/>
            <person name="Huang X."/>
            <person name="Cai T."/>
            <person name="Yu Z."/>
            <person name="Luo J."/>
            <person name="Zhao J."/>
            <person name="Bryant D.A."/>
        </authorList>
    </citation>
    <scope>NUCLEOTIDE SEQUENCE [LARGE SCALE GENOMIC DNA]</scope>
    <source>
        <strain>ATCC 27264 / PCC 7002 / PR-6</strain>
    </source>
</reference>
<comment type="function">
    <text evidence="1">Produces ATP from ADP in the presence of a proton gradient across the membrane. The gamma chain is believed to be important in regulating ATPase activity and the flow of protons through the CF(0) complex.</text>
</comment>
<comment type="subunit">
    <text evidence="1">F-type ATPases have 2 components, CF(1) - the catalytic core - and CF(0) - the membrane proton channel. CF(1) has five subunits: alpha(3), beta(3), gamma(1), delta(1), epsilon(1). CF(0) has three main subunits: a, b and c.</text>
</comment>
<comment type="subcellular location">
    <subcellularLocation>
        <location evidence="1">Cellular thylakoid membrane</location>
        <topology evidence="1">Peripheral membrane protein</topology>
    </subcellularLocation>
</comment>
<comment type="similarity">
    <text evidence="1">Belongs to the ATPase gamma chain family.</text>
</comment>
<gene>
    <name evidence="1" type="primary">atpG</name>
    <name evidence="1" type="synonym">atpC</name>
    <name type="ordered locus">SYNPCC7002_A0733</name>
</gene>
<proteinExistence type="inferred from homology"/>
<protein>
    <recommendedName>
        <fullName evidence="1">ATP synthase gamma chain</fullName>
    </recommendedName>
    <alternativeName>
        <fullName evidence="1">ATP synthase F1 sector gamma subunit</fullName>
    </alternativeName>
    <alternativeName>
        <fullName evidence="1">F-ATPase gamma subunit</fullName>
    </alternativeName>
</protein>
<feature type="chain" id="PRO_1000134217" description="ATP synthase gamma chain">
    <location>
        <begin position="1"/>
        <end position="314"/>
    </location>
</feature>
<sequence>MPNLKGIRDRIQSVKNTKKITEAMRLVAAAKVRRAQEQVTSTRPFANTLLQVLYSLKSRLRLEEADLPLLKQREVKCVGLLVITGDRGLCGGYNANIIRKAERRAKELAAAGINYKFVLVGRKAVQYFQNRQAPVAKTYAGLEQIPSAAEASDIADELLSLFLSEEVDKIELIYTRFVSLISSQPVVQTLLPLVPEALTNPDDETFNLITRGGKFQVEREKVATEVKELPADMIFEQDPKDILNALLPLYLSNQLLRALQEGAASELAARMTAMNNASDNASDLMKTLTLSYNKARQAAITQELSEVVAGANAL</sequence>
<organism>
    <name type="scientific">Picosynechococcus sp. (strain ATCC 27264 / PCC 7002 / PR-6)</name>
    <name type="common">Agmenellum quadruplicatum</name>
    <dbReference type="NCBI Taxonomy" id="32049"/>
    <lineage>
        <taxon>Bacteria</taxon>
        <taxon>Bacillati</taxon>
        <taxon>Cyanobacteriota</taxon>
        <taxon>Cyanophyceae</taxon>
        <taxon>Oscillatoriophycideae</taxon>
        <taxon>Chroococcales</taxon>
        <taxon>Geminocystaceae</taxon>
        <taxon>Picosynechococcus</taxon>
    </lineage>
</organism>